<comment type="function">
    <text evidence="1">Catalyzes the conversion of uracil and 5-phospho-alpha-D-ribose 1-diphosphate (PRPP) to UMP and diphosphate.</text>
</comment>
<comment type="catalytic activity">
    <reaction evidence="1">
        <text>UMP + diphosphate = 5-phospho-alpha-D-ribose 1-diphosphate + uracil</text>
        <dbReference type="Rhea" id="RHEA:13017"/>
        <dbReference type="ChEBI" id="CHEBI:17568"/>
        <dbReference type="ChEBI" id="CHEBI:33019"/>
        <dbReference type="ChEBI" id="CHEBI:57865"/>
        <dbReference type="ChEBI" id="CHEBI:58017"/>
        <dbReference type="EC" id="2.4.2.9"/>
    </reaction>
</comment>
<comment type="cofactor">
    <cofactor evidence="1">
        <name>Mg(2+)</name>
        <dbReference type="ChEBI" id="CHEBI:18420"/>
    </cofactor>
    <text evidence="1">Binds 1 Mg(2+) ion per subunit. The magnesium is bound as Mg-PRPP.</text>
</comment>
<comment type="activity regulation">
    <text evidence="1">Allosterically activated by GTP.</text>
</comment>
<comment type="pathway">
    <text evidence="1">Pyrimidine metabolism; UMP biosynthesis via salvage pathway; UMP from uracil: step 1/1.</text>
</comment>
<comment type="similarity">
    <text evidence="1">Belongs to the UPRTase family.</text>
</comment>
<dbReference type="EC" id="2.4.2.9" evidence="1"/>
<dbReference type="EMBL" id="CP000885">
    <property type="protein sequence ID" value="ABX40944.1"/>
    <property type="molecule type" value="Genomic_DNA"/>
</dbReference>
<dbReference type="RefSeq" id="WP_012198588.1">
    <property type="nucleotide sequence ID" value="NC_010001.1"/>
</dbReference>
<dbReference type="SMR" id="A9KIB0"/>
<dbReference type="STRING" id="357809.Cphy_0557"/>
<dbReference type="KEGG" id="cpy:Cphy_0557"/>
<dbReference type="eggNOG" id="COG0035">
    <property type="taxonomic scope" value="Bacteria"/>
</dbReference>
<dbReference type="HOGENOM" id="CLU_067096_2_2_9"/>
<dbReference type="OrthoDB" id="9781675at2"/>
<dbReference type="UniPathway" id="UPA00574">
    <property type="reaction ID" value="UER00636"/>
</dbReference>
<dbReference type="Proteomes" id="UP000000370">
    <property type="component" value="Chromosome"/>
</dbReference>
<dbReference type="GO" id="GO:0005525">
    <property type="term" value="F:GTP binding"/>
    <property type="evidence" value="ECO:0007669"/>
    <property type="project" value="UniProtKB-KW"/>
</dbReference>
<dbReference type="GO" id="GO:0000287">
    <property type="term" value="F:magnesium ion binding"/>
    <property type="evidence" value="ECO:0007669"/>
    <property type="project" value="UniProtKB-UniRule"/>
</dbReference>
<dbReference type="GO" id="GO:0004845">
    <property type="term" value="F:uracil phosphoribosyltransferase activity"/>
    <property type="evidence" value="ECO:0007669"/>
    <property type="project" value="UniProtKB-UniRule"/>
</dbReference>
<dbReference type="GO" id="GO:0044206">
    <property type="term" value="P:UMP salvage"/>
    <property type="evidence" value="ECO:0007669"/>
    <property type="project" value="UniProtKB-UniRule"/>
</dbReference>
<dbReference type="GO" id="GO:0006223">
    <property type="term" value="P:uracil salvage"/>
    <property type="evidence" value="ECO:0007669"/>
    <property type="project" value="InterPro"/>
</dbReference>
<dbReference type="CDD" id="cd06223">
    <property type="entry name" value="PRTases_typeI"/>
    <property type="match status" value="1"/>
</dbReference>
<dbReference type="FunFam" id="3.40.50.2020:FF:000003">
    <property type="entry name" value="Uracil phosphoribosyltransferase"/>
    <property type="match status" value="1"/>
</dbReference>
<dbReference type="Gene3D" id="3.40.50.2020">
    <property type="match status" value="1"/>
</dbReference>
<dbReference type="HAMAP" id="MF_01218_B">
    <property type="entry name" value="Upp_B"/>
    <property type="match status" value="1"/>
</dbReference>
<dbReference type="InterPro" id="IPR000836">
    <property type="entry name" value="PRibTrfase_dom"/>
</dbReference>
<dbReference type="InterPro" id="IPR029057">
    <property type="entry name" value="PRTase-like"/>
</dbReference>
<dbReference type="InterPro" id="IPR034332">
    <property type="entry name" value="Upp_B"/>
</dbReference>
<dbReference type="InterPro" id="IPR050054">
    <property type="entry name" value="UPRTase/APRTase"/>
</dbReference>
<dbReference type="InterPro" id="IPR005765">
    <property type="entry name" value="Ura_phspho_trans"/>
</dbReference>
<dbReference type="NCBIfam" id="NF001097">
    <property type="entry name" value="PRK00129.1"/>
    <property type="match status" value="1"/>
</dbReference>
<dbReference type="NCBIfam" id="TIGR01091">
    <property type="entry name" value="upp"/>
    <property type="match status" value="1"/>
</dbReference>
<dbReference type="PANTHER" id="PTHR32315">
    <property type="entry name" value="ADENINE PHOSPHORIBOSYLTRANSFERASE"/>
    <property type="match status" value="1"/>
</dbReference>
<dbReference type="PANTHER" id="PTHR32315:SF4">
    <property type="entry name" value="URACIL PHOSPHORIBOSYLTRANSFERASE, CHLOROPLASTIC"/>
    <property type="match status" value="1"/>
</dbReference>
<dbReference type="Pfam" id="PF14681">
    <property type="entry name" value="UPRTase"/>
    <property type="match status" value="1"/>
</dbReference>
<dbReference type="SUPFAM" id="SSF53271">
    <property type="entry name" value="PRTase-like"/>
    <property type="match status" value="1"/>
</dbReference>
<sequence length="209" mass="23125">MSNVCIMDHPLIQHKIGIMRMKTTSTKEFRDLVAEVAMLIYYEASRNLPLADKEVETPLTKAIVKEIEGKKLCVVPILRAGMHMADGILNLTPNAKVGHIGLYRNEETLEPVEYFCKLPSDAPDREIFVVDPMLATGGSAIAAITLLKRRGIEKIRFLCLIAAPEGLKKLQEAHPDVDVFIGALDERLNEQGYILPGLGDAGDRIYGTK</sequence>
<accession>A9KIB0</accession>
<proteinExistence type="inferred from homology"/>
<evidence type="ECO:0000255" key="1">
    <source>
        <dbReference type="HAMAP-Rule" id="MF_01218"/>
    </source>
</evidence>
<keyword id="KW-0021">Allosteric enzyme</keyword>
<keyword id="KW-0328">Glycosyltransferase</keyword>
<keyword id="KW-0342">GTP-binding</keyword>
<keyword id="KW-0460">Magnesium</keyword>
<keyword id="KW-0547">Nucleotide-binding</keyword>
<keyword id="KW-1185">Reference proteome</keyword>
<keyword id="KW-0808">Transferase</keyword>
<protein>
    <recommendedName>
        <fullName evidence="1">Uracil phosphoribosyltransferase</fullName>
        <ecNumber evidence="1">2.4.2.9</ecNumber>
    </recommendedName>
    <alternativeName>
        <fullName evidence="1">UMP pyrophosphorylase</fullName>
    </alternativeName>
    <alternativeName>
        <fullName evidence="1">UPRTase</fullName>
    </alternativeName>
</protein>
<name>UPP_LACP7</name>
<organism>
    <name type="scientific">Lachnoclostridium phytofermentans (strain ATCC 700394 / DSM 18823 / ISDg)</name>
    <name type="common">Clostridium phytofermentans</name>
    <dbReference type="NCBI Taxonomy" id="357809"/>
    <lineage>
        <taxon>Bacteria</taxon>
        <taxon>Bacillati</taxon>
        <taxon>Bacillota</taxon>
        <taxon>Clostridia</taxon>
        <taxon>Lachnospirales</taxon>
        <taxon>Lachnospiraceae</taxon>
    </lineage>
</organism>
<feature type="chain" id="PRO_1000139111" description="Uracil phosphoribosyltransferase">
    <location>
        <begin position="1"/>
        <end position="209"/>
    </location>
</feature>
<feature type="binding site" evidence="1">
    <location>
        <position position="79"/>
    </location>
    <ligand>
        <name>5-phospho-alpha-D-ribose 1-diphosphate</name>
        <dbReference type="ChEBI" id="CHEBI:58017"/>
    </ligand>
</feature>
<feature type="binding site" evidence="1">
    <location>
        <position position="104"/>
    </location>
    <ligand>
        <name>5-phospho-alpha-D-ribose 1-diphosphate</name>
        <dbReference type="ChEBI" id="CHEBI:58017"/>
    </ligand>
</feature>
<feature type="binding site" evidence="1">
    <location>
        <begin position="131"/>
        <end position="139"/>
    </location>
    <ligand>
        <name>5-phospho-alpha-D-ribose 1-diphosphate</name>
        <dbReference type="ChEBI" id="CHEBI:58017"/>
    </ligand>
</feature>
<feature type="binding site" evidence="1">
    <location>
        <position position="194"/>
    </location>
    <ligand>
        <name>uracil</name>
        <dbReference type="ChEBI" id="CHEBI:17568"/>
    </ligand>
</feature>
<feature type="binding site" evidence="1">
    <location>
        <begin position="199"/>
        <end position="201"/>
    </location>
    <ligand>
        <name>uracil</name>
        <dbReference type="ChEBI" id="CHEBI:17568"/>
    </ligand>
</feature>
<feature type="binding site" evidence="1">
    <location>
        <position position="200"/>
    </location>
    <ligand>
        <name>5-phospho-alpha-D-ribose 1-diphosphate</name>
        <dbReference type="ChEBI" id="CHEBI:58017"/>
    </ligand>
</feature>
<gene>
    <name evidence="1" type="primary">upp</name>
    <name type="ordered locus">Cphy_0557</name>
</gene>
<reference key="1">
    <citation type="submission" date="2007-11" db="EMBL/GenBank/DDBJ databases">
        <title>Complete genome sequence of Clostridium phytofermentans ISDg.</title>
        <authorList>
            <person name="Leschine S.B."/>
            <person name="Warnick T.A."/>
            <person name="Blanchard J.L."/>
            <person name="Schnell D.J."/>
            <person name="Petit E.L."/>
            <person name="LaTouf W.G."/>
            <person name="Copeland A."/>
            <person name="Lucas S."/>
            <person name="Lapidus A."/>
            <person name="Barry K."/>
            <person name="Glavina del Rio T."/>
            <person name="Dalin E."/>
            <person name="Tice H."/>
            <person name="Pitluck S."/>
            <person name="Kiss H."/>
            <person name="Brettin T."/>
            <person name="Bruce D."/>
            <person name="Detter J.C."/>
            <person name="Han C."/>
            <person name="Kuske C."/>
            <person name="Schmutz J."/>
            <person name="Larimer F."/>
            <person name="Land M."/>
            <person name="Hauser L."/>
            <person name="Kyrpides N."/>
            <person name="Kim E.A."/>
            <person name="Richardson P."/>
        </authorList>
    </citation>
    <scope>NUCLEOTIDE SEQUENCE [LARGE SCALE GENOMIC DNA]</scope>
    <source>
        <strain>ATCC 700394 / DSM 18823 / ISDg</strain>
    </source>
</reference>